<sequence>MTDKTSLSYKDAGVDIDAGNALVGRIKGVVKKTRRPEVMGGLGGFGALCALPQKYREPVLVSGTDGVGTKLRLAMDLKRHDTIGIDLVAMCVNDLVVQGAEPLFFLDYYATGKLDVDTASAVISGIAEGCLQSGCSLVGGETAEMPGMYHGEDYDVAGFCVGVVEKSEIIDGSKVSDGDVLIALGSSGPHSNGYSLVRKILEVSGCDPQTTELDGKPLADHLLAPTRIYVKSVLELIEKVDVHAIAHLTGGGFWENIPRVLPDNTQAVIDESSWQWPEVFNWLQTAGNVEHHEMYRTFNCGVGMIIALPAPEVDKALALLNANGENAWKIGIIKASDSEQRVVIE</sequence>
<name>PUR5_ECODH</name>
<accession>B1XAX4</accession>
<proteinExistence type="inferred from homology"/>
<keyword id="KW-0067">ATP-binding</keyword>
<keyword id="KW-0963">Cytoplasm</keyword>
<keyword id="KW-0436">Ligase</keyword>
<keyword id="KW-0547">Nucleotide-binding</keyword>
<keyword id="KW-0658">Purine biosynthesis</keyword>
<reference key="1">
    <citation type="journal article" date="2008" name="J. Bacteriol.">
        <title>The complete genome sequence of Escherichia coli DH10B: insights into the biology of a laboratory workhorse.</title>
        <authorList>
            <person name="Durfee T."/>
            <person name="Nelson R."/>
            <person name="Baldwin S."/>
            <person name="Plunkett G. III"/>
            <person name="Burland V."/>
            <person name="Mau B."/>
            <person name="Petrosino J.F."/>
            <person name="Qin X."/>
            <person name="Muzny D.M."/>
            <person name="Ayele M."/>
            <person name="Gibbs R.A."/>
            <person name="Csorgo B."/>
            <person name="Posfai G."/>
            <person name="Weinstock G.M."/>
            <person name="Blattner F.R."/>
        </authorList>
    </citation>
    <scope>NUCLEOTIDE SEQUENCE [LARGE SCALE GENOMIC DNA]</scope>
    <source>
        <strain>K12 / DH10B</strain>
    </source>
</reference>
<comment type="catalytic activity">
    <reaction evidence="1">
        <text>2-formamido-N(1)-(5-O-phospho-beta-D-ribosyl)acetamidine + ATP = 5-amino-1-(5-phospho-beta-D-ribosyl)imidazole + ADP + phosphate + H(+)</text>
        <dbReference type="Rhea" id="RHEA:23032"/>
        <dbReference type="ChEBI" id="CHEBI:15378"/>
        <dbReference type="ChEBI" id="CHEBI:30616"/>
        <dbReference type="ChEBI" id="CHEBI:43474"/>
        <dbReference type="ChEBI" id="CHEBI:137981"/>
        <dbReference type="ChEBI" id="CHEBI:147287"/>
        <dbReference type="ChEBI" id="CHEBI:456216"/>
        <dbReference type="EC" id="6.3.3.1"/>
    </reaction>
</comment>
<comment type="pathway">
    <text evidence="1">Purine metabolism; IMP biosynthesis via de novo pathway; 5-amino-1-(5-phospho-D-ribosyl)imidazole from N(2)-formyl-N(1)-(5-phospho-D-ribosyl)glycinamide: step 2/2.</text>
</comment>
<comment type="subcellular location">
    <subcellularLocation>
        <location evidence="1">Cytoplasm</location>
    </subcellularLocation>
</comment>
<comment type="similarity">
    <text evidence="1">Belongs to the AIR synthase family.</text>
</comment>
<evidence type="ECO:0000255" key="1">
    <source>
        <dbReference type="HAMAP-Rule" id="MF_00741"/>
    </source>
</evidence>
<protein>
    <recommendedName>
        <fullName evidence="1">Phosphoribosylformylglycinamidine cyclo-ligase</fullName>
        <ecNumber evidence="1">6.3.3.1</ecNumber>
    </recommendedName>
    <alternativeName>
        <fullName evidence="1">AIR synthase</fullName>
    </alternativeName>
    <alternativeName>
        <fullName evidence="1">AIRS</fullName>
    </alternativeName>
    <alternativeName>
        <fullName evidence="1">Phosphoribosyl-aminoimidazole synthetase</fullName>
    </alternativeName>
</protein>
<dbReference type="EC" id="6.3.3.1" evidence="1"/>
<dbReference type="EMBL" id="CP000948">
    <property type="protein sequence ID" value="ACB03651.1"/>
    <property type="molecule type" value="Genomic_DNA"/>
</dbReference>
<dbReference type="RefSeq" id="WP_001336050.1">
    <property type="nucleotide sequence ID" value="NC_010473.1"/>
</dbReference>
<dbReference type="SMR" id="B1XAX4"/>
<dbReference type="KEGG" id="ecd:ECDH10B_2665"/>
<dbReference type="HOGENOM" id="CLU_047116_0_0_6"/>
<dbReference type="UniPathway" id="UPA00074">
    <property type="reaction ID" value="UER00129"/>
</dbReference>
<dbReference type="GO" id="GO:0005829">
    <property type="term" value="C:cytosol"/>
    <property type="evidence" value="ECO:0007669"/>
    <property type="project" value="TreeGrafter"/>
</dbReference>
<dbReference type="GO" id="GO:0005524">
    <property type="term" value="F:ATP binding"/>
    <property type="evidence" value="ECO:0007669"/>
    <property type="project" value="UniProtKB-KW"/>
</dbReference>
<dbReference type="GO" id="GO:0004637">
    <property type="term" value="F:phosphoribosylamine-glycine ligase activity"/>
    <property type="evidence" value="ECO:0007669"/>
    <property type="project" value="TreeGrafter"/>
</dbReference>
<dbReference type="GO" id="GO:0004641">
    <property type="term" value="F:phosphoribosylformylglycinamidine cyclo-ligase activity"/>
    <property type="evidence" value="ECO:0007669"/>
    <property type="project" value="UniProtKB-UniRule"/>
</dbReference>
<dbReference type="GO" id="GO:0006189">
    <property type="term" value="P:'de novo' IMP biosynthetic process"/>
    <property type="evidence" value="ECO:0007669"/>
    <property type="project" value="UniProtKB-UniRule"/>
</dbReference>
<dbReference type="GO" id="GO:0046084">
    <property type="term" value="P:adenine biosynthetic process"/>
    <property type="evidence" value="ECO:0007669"/>
    <property type="project" value="TreeGrafter"/>
</dbReference>
<dbReference type="CDD" id="cd02196">
    <property type="entry name" value="PurM"/>
    <property type="match status" value="1"/>
</dbReference>
<dbReference type="FunFam" id="3.30.1330.10:FF:000001">
    <property type="entry name" value="Phosphoribosylformylglycinamidine cyclo-ligase"/>
    <property type="match status" value="1"/>
</dbReference>
<dbReference type="FunFam" id="3.90.650.10:FF:000001">
    <property type="entry name" value="Phosphoribosylformylglycinamidine cyclo-ligase"/>
    <property type="match status" value="1"/>
</dbReference>
<dbReference type="Gene3D" id="3.90.650.10">
    <property type="entry name" value="PurM-like C-terminal domain"/>
    <property type="match status" value="1"/>
</dbReference>
<dbReference type="Gene3D" id="3.30.1330.10">
    <property type="entry name" value="PurM-like, N-terminal domain"/>
    <property type="match status" value="1"/>
</dbReference>
<dbReference type="HAMAP" id="MF_00741">
    <property type="entry name" value="AIRS"/>
    <property type="match status" value="1"/>
</dbReference>
<dbReference type="InterPro" id="IPR010918">
    <property type="entry name" value="PurM-like_C_dom"/>
</dbReference>
<dbReference type="InterPro" id="IPR036676">
    <property type="entry name" value="PurM-like_C_sf"/>
</dbReference>
<dbReference type="InterPro" id="IPR016188">
    <property type="entry name" value="PurM-like_N"/>
</dbReference>
<dbReference type="InterPro" id="IPR036921">
    <property type="entry name" value="PurM-like_N_sf"/>
</dbReference>
<dbReference type="InterPro" id="IPR004733">
    <property type="entry name" value="PurM_cligase"/>
</dbReference>
<dbReference type="NCBIfam" id="TIGR00878">
    <property type="entry name" value="purM"/>
    <property type="match status" value="1"/>
</dbReference>
<dbReference type="PANTHER" id="PTHR10520:SF12">
    <property type="entry name" value="TRIFUNCTIONAL PURINE BIOSYNTHETIC PROTEIN ADENOSINE-3"/>
    <property type="match status" value="1"/>
</dbReference>
<dbReference type="PANTHER" id="PTHR10520">
    <property type="entry name" value="TRIFUNCTIONAL PURINE BIOSYNTHETIC PROTEIN ADENOSINE-3-RELATED"/>
    <property type="match status" value="1"/>
</dbReference>
<dbReference type="Pfam" id="PF00586">
    <property type="entry name" value="AIRS"/>
    <property type="match status" value="1"/>
</dbReference>
<dbReference type="Pfam" id="PF02769">
    <property type="entry name" value="AIRS_C"/>
    <property type="match status" value="1"/>
</dbReference>
<dbReference type="SUPFAM" id="SSF56042">
    <property type="entry name" value="PurM C-terminal domain-like"/>
    <property type="match status" value="1"/>
</dbReference>
<dbReference type="SUPFAM" id="SSF55326">
    <property type="entry name" value="PurM N-terminal domain-like"/>
    <property type="match status" value="1"/>
</dbReference>
<organism>
    <name type="scientific">Escherichia coli (strain K12 / DH10B)</name>
    <dbReference type="NCBI Taxonomy" id="316385"/>
    <lineage>
        <taxon>Bacteria</taxon>
        <taxon>Pseudomonadati</taxon>
        <taxon>Pseudomonadota</taxon>
        <taxon>Gammaproteobacteria</taxon>
        <taxon>Enterobacterales</taxon>
        <taxon>Enterobacteriaceae</taxon>
        <taxon>Escherichia</taxon>
    </lineage>
</organism>
<feature type="chain" id="PRO_1000193015" description="Phosphoribosylformylglycinamidine cyclo-ligase">
    <location>
        <begin position="1"/>
        <end position="345"/>
    </location>
</feature>
<gene>
    <name evidence="1" type="primary">purM</name>
    <name type="ordered locus">ECDH10B_2665</name>
</gene>